<comment type="function">
    <text evidence="1">Binds to the 23S rRNA.</text>
</comment>
<comment type="similarity">
    <text evidence="1">Belongs to the bacterial ribosomal protein bL9 family.</text>
</comment>
<keyword id="KW-1185">Reference proteome</keyword>
<keyword id="KW-0687">Ribonucleoprotein</keyword>
<keyword id="KW-0689">Ribosomal protein</keyword>
<keyword id="KW-0694">RNA-binding</keyword>
<keyword id="KW-0699">rRNA-binding</keyword>
<name>RL9_PHEZH</name>
<evidence type="ECO:0000255" key="1">
    <source>
        <dbReference type="HAMAP-Rule" id="MF_00503"/>
    </source>
</evidence>
<evidence type="ECO:0000256" key="2">
    <source>
        <dbReference type="SAM" id="MobiDB-lite"/>
    </source>
</evidence>
<evidence type="ECO:0000305" key="3"/>
<protein>
    <recommendedName>
        <fullName evidence="1">Large ribosomal subunit protein bL9</fullName>
    </recommendedName>
    <alternativeName>
        <fullName evidence="3">50S ribosomal protein L9</fullName>
    </alternativeName>
</protein>
<dbReference type="EMBL" id="CP000747">
    <property type="protein sequence ID" value="ACG77955.1"/>
    <property type="molecule type" value="Genomic_DNA"/>
</dbReference>
<dbReference type="RefSeq" id="WP_012522098.1">
    <property type="nucleotide sequence ID" value="NC_011144.1"/>
</dbReference>
<dbReference type="SMR" id="B4RAE8"/>
<dbReference type="STRING" id="450851.PHZ_c1544"/>
<dbReference type="KEGG" id="pzu:PHZ_c1544"/>
<dbReference type="eggNOG" id="COG0359">
    <property type="taxonomic scope" value="Bacteria"/>
</dbReference>
<dbReference type="HOGENOM" id="CLU_078938_1_0_5"/>
<dbReference type="OrthoDB" id="9788336at2"/>
<dbReference type="Proteomes" id="UP000001868">
    <property type="component" value="Chromosome"/>
</dbReference>
<dbReference type="GO" id="GO:1990904">
    <property type="term" value="C:ribonucleoprotein complex"/>
    <property type="evidence" value="ECO:0007669"/>
    <property type="project" value="UniProtKB-KW"/>
</dbReference>
<dbReference type="GO" id="GO:0005840">
    <property type="term" value="C:ribosome"/>
    <property type="evidence" value="ECO:0007669"/>
    <property type="project" value="UniProtKB-KW"/>
</dbReference>
<dbReference type="GO" id="GO:0019843">
    <property type="term" value="F:rRNA binding"/>
    <property type="evidence" value="ECO:0007669"/>
    <property type="project" value="UniProtKB-UniRule"/>
</dbReference>
<dbReference type="GO" id="GO:0003735">
    <property type="term" value="F:structural constituent of ribosome"/>
    <property type="evidence" value="ECO:0007669"/>
    <property type="project" value="InterPro"/>
</dbReference>
<dbReference type="GO" id="GO:0006412">
    <property type="term" value="P:translation"/>
    <property type="evidence" value="ECO:0007669"/>
    <property type="project" value="UniProtKB-UniRule"/>
</dbReference>
<dbReference type="Gene3D" id="3.10.430.100">
    <property type="entry name" value="Ribosomal protein L9, C-terminal domain"/>
    <property type="match status" value="1"/>
</dbReference>
<dbReference type="Gene3D" id="3.40.5.10">
    <property type="entry name" value="Ribosomal protein L9, N-terminal domain"/>
    <property type="match status" value="1"/>
</dbReference>
<dbReference type="HAMAP" id="MF_00503">
    <property type="entry name" value="Ribosomal_bL9"/>
    <property type="match status" value="1"/>
</dbReference>
<dbReference type="InterPro" id="IPR000244">
    <property type="entry name" value="Ribosomal_bL9"/>
</dbReference>
<dbReference type="InterPro" id="IPR009027">
    <property type="entry name" value="Ribosomal_bL9/RNase_H1_N"/>
</dbReference>
<dbReference type="InterPro" id="IPR020594">
    <property type="entry name" value="Ribosomal_bL9_bac/chp"/>
</dbReference>
<dbReference type="InterPro" id="IPR020069">
    <property type="entry name" value="Ribosomal_bL9_C"/>
</dbReference>
<dbReference type="InterPro" id="IPR036791">
    <property type="entry name" value="Ribosomal_bL9_C_sf"/>
</dbReference>
<dbReference type="InterPro" id="IPR020070">
    <property type="entry name" value="Ribosomal_bL9_N"/>
</dbReference>
<dbReference type="InterPro" id="IPR036935">
    <property type="entry name" value="Ribosomal_bL9_N_sf"/>
</dbReference>
<dbReference type="NCBIfam" id="TIGR00158">
    <property type="entry name" value="L9"/>
    <property type="match status" value="1"/>
</dbReference>
<dbReference type="PANTHER" id="PTHR21368">
    <property type="entry name" value="50S RIBOSOMAL PROTEIN L9"/>
    <property type="match status" value="1"/>
</dbReference>
<dbReference type="Pfam" id="PF03948">
    <property type="entry name" value="Ribosomal_L9_C"/>
    <property type="match status" value="1"/>
</dbReference>
<dbReference type="Pfam" id="PF01281">
    <property type="entry name" value="Ribosomal_L9_N"/>
    <property type="match status" value="1"/>
</dbReference>
<dbReference type="SUPFAM" id="SSF55658">
    <property type="entry name" value="L9 N-domain-like"/>
    <property type="match status" value="1"/>
</dbReference>
<dbReference type="SUPFAM" id="SSF55653">
    <property type="entry name" value="Ribosomal protein L9 C-domain"/>
    <property type="match status" value="1"/>
</dbReference>
<dbReference type="PROSITE" id="PS00651">
    <property type="entry name" value="RIBOSOMAL_L9"/>
    <property type="match status" value="1"/>
</dbReference>
<feature type="chain" id="PRO_1000126950" description="Large ribosomal subunit protein bL9">
    <location>
        <begin position="1"/>
        <end position="196"/>
    </location>
</feature>
<feature type="region of interest" description="Disordered" evidence="2">
    <location>
        <begin position="174"/>
        <end position="196"/>
    </location>
</feature>
<feature type="compositionally biased region" description="Polar residues" evidence="2">
    <location>
        <begin position="186"/>
        <end position="196"/>
    </location>
</feature>
<organism>
    <name type="scientific">Phenylobacterium zucineum (strain HLK1)</name>
    <dbReference type="NCBI Taxonomy" id="450851"/>
    <lineage>
        <taxon>Bacteria</taxon>
        <taxon>Pseudomonadati</taxon>
        <taxon>Pseudomonadota</taxon>
        <taxon>Alphaproteobacteria</taxon>
        <taxon>Caulobacterales</taxon>
        <taxon>Caulobacteraceae</taxon>
        <taxon>Phenylobacterium</taxon>
    </lineage>
</organism>
<gene>
    <name evidence="1" type="primary">rplI</name>
    <name type="ordered locus">PHZ_c1544</name>
</gene>
<reference key="1">
    <citation type="journal article" date="2008" name="BMC Genomics">
        <title>Complete genome of Phenylobacterium zucineum - a novel facultative intracellular bacterium isolated from human erythroleukemia cell line K562.</title>
        <authorList>
            <person name="Luo Y."/>
            <person name="Xu X."/>
            <person name="Ding Z."/>
            <person name="Liu Z."/>
            <person name="Zhang B."/>
            <person name="Yan Z."/>
            <person name="Sun J."/>
            <person name="Hu S."/>
            <person name="Hu X."/>
        </authorList>
    </citation>
    <scope>NUCLEOTIDE SEQUENCE [LARGE SCALE GENOMIC DNA]</scope>
    <source>
        <strain>HLK1</strain>
    </source>
</reference>
<proteinExistence type="inferred from homology"/>
<accession>B4RAE8</accession>
<sequence length="196" mass="21078">MKVILLERLEGWGGLGDVVDVKDGYARNFLLPRQKALRANGANLKVFEAQRAEIEARNAKAKEAAGKAGEKLDGTQYVLIRQAGESGQLYGSVSGRDVADAVNAEGGKVERSMVVLDKPIKTLGMHEVKIRLHSEVAVTVTLNIARSQDEADRQARGENVIASQFEDERMAAEQAAADLLEGGAGQQASEYTEAQA</sequence>